<keyword id="KW-0686">Riboflavin biosynthesis</keyword>
<keyword id="KW-0808">Transferase</keyword>
<organism>
    <name type="scientific">Bacteroides fragilis (strain YCH46)</name>
    <dbReference type="NCBI Taxonomy" id="295405"/>
    <lineage>
        <taxon>Bacteria</taxon>
        <taxon>Pseudomonadati</taxon>
        <taxon>Bacteroidota</taxon>
        <taxon>Bacteroidia</taxon>
        <taxon>Bacteroidales</taxon>
        <taxon>Bacteroidaceae</taxon>
        <taxon>Bacteroides</taxon>
    </lineage>
</organism>
<protein>
    <recommendedName>
        <fullName evidence="1">6,7-dimethyl-8-ribityllumazine synthase</fullName>
        <shortName evidence="1">DMRL synthase</shortName>
        <shortName evidence="1">LS</shortName>
        <shortName evidence="1">Lumazine synthase</shortName>
        <ecNumber evidence="1">2.5.1.78</ecNumber>
    </recommendedName>
</protein>
<evidence type="ECO:0000255" key="1">
    <source>
        <dbReference type="HAMAP-Rule" id="MF_00178"/>
    </source>
</evidence>
<reference key="1">
    <citation type="journal article" date="2004" name="Proc. Natl. Acad. Sci. U.S.A.">
        <title>Genomic analysis of Bacteroides fragilis reveals extensive DNA inversions regulating cell surface adaptation.</title>
        <authorList>
            <person name="Kuwahara T."/>
            <person name="Yamashita A."/>
            <person name="Hirakawa H."/>
            <person name="Nakayama H."/>
            <person name="Toh H."/>
            <person name="Okada N."/>
            <person name="Kuhara S."/>
            <person name="Hattori M."/>
            <person name="Hayashi T."/>
            <person name="Ohnishi Y."/>
        </authorList>
    </citation>
    <scope>NUCLEOTIDE SEQUENCE [LARGE SCALE GENOMIC DNA]</scope>
    <source>
        <strain>YCH46</strain>
    </source>
</reference>
<accession>Q64XS0</accession>
<comment type="function">
    <text evidence="1">Catalyzes the formation of 6,7-dimethyl-8-ribityllumazine by condensation of 5-amino-6-(D-ribitylamino)uracil with 3,4-dihydroxy-2-butanone 4-phosphate. This is the penultimate step in the biosynthesis of riboflavin.</text>
</comment>
<comment type="catalytic activity">
    <reaction evidence="1">
        <text>(2S)-2-hydroxy-3-oxobutyl phosphate + 5-amino-6-(D-ribitylamino)uracil = 6,7-dimethyl-8-(1-D-ribityl)lumazine + phosphate + 2 H2O + H(+)</text>
        <dbReference type="Rhea" id="RHEA:26152"/>
        <dbReference type="ChEBI" id="CHEBI:15377"/>
        <dbReference type="ChEBI" id="CHEBI:15378"/>
        <dbReference type="ChEBI" id="CHEBI:15934"/>
        <dbReference type="ChEBI" id="CHEBI:43474"/>
        <dbReference type="ChEBI" id="CHEBI:58201"/>
        <dbReference type="ChEBI" id="CHEBI:58830"/>
        <dbReference type="EC" id="2.5.1.78"/>
    </reaction>
</comment>
<comment type="pathway">
    <text evidence="1">Cofactor biosynthesis; riboflavin biosynthesis; riboflavin from 2-hydroxy-3-oxobutyl phosphate and 5-amino-6-(D-ribitylamino)uracil: step 1/2.</text>
</comment>
<comment type="similarity">
    <text evidence="1">Belongs to the DMRL synthase family.</text>
</comment>
<sequence length="143" mass="15322">MKFGIVVSEWNANITGALLDGAVKTLKKHGAKEENILVKTVPGSFELTFGANQMMENSDIDAIIIIGCVIKGDTPHFDYVCMGVTQGVAQLNATGDIPVIYGLITTNTMEQAEDRAGGKLGNKGDECAITAIKMIDFVWSLNK</sequence>
<feature type="chain" id="PRO_1000040368" description="6,7-dimethyl-8-ribityllumazine synthase">
    <location>
        <begin position="1"/>
        <end position="143"/>
    </location>
</feature>
<feature type="active site" description="Proton donor" evidence="1">
    <location>
        <position position="76"/>
    </location>
</feature>
<feature type="binding site" evidence="1">
    <location>
        <position position="10"/>
    </location>
    <ligand>
        <name>5-amino-6-(D-ribitylamino)uracil</name>
        <dbReference type="ChEBI" id="CHEBI:15934"/>
    </ligand>
</feature>
<feature type="binding site" evidence="1">
    <location>
        <begin position="44"/>
        <end position="46"/>
    </location>
    <ligand>
        <name>5-amino-6-(D-ribitylamino)uracil</name>
        <dbReference type="ChEBI" id="CHEBI:15934"/>
    </ligand>
</feature>
<feature type="binding site" evidence="1">
    <location>
        <begin position="68"/>
        <end position="70"/>
    </location>
    <ligand>
        <name>5-amino-6-(D-ribitylamino)uracil</name>
        <dbReference type="ChEBI" id="CHEBI:15934"/>
    </ligand>
</feature>
<feature type="binding site" evidence="1">
    <location>
        <begin position="73"/>
        <end position="74"/>
    </location>
    <ligand>
        <name>(2S)-2-hydroxy-3-oxobutyl phosphate</name>
        <dbReference type="ChEBI" id="CHEBI:58830"/>
    </ligand>
</feature>
<feature type="binding site" evidence="1">
    <location>
        <position position="101"/>
    </location>
    <ligand>
        <name>5-amino-6-(D-ribitylamino)uracil</name>
        <dbReference type="ChEBI" id="CHEBI:15934"/>
    </ligand>
</feature>
<feature type="binding site" evidence="1">
    <location>
        <position position="115"/>
    </location>
    <ligand>
        <name>(2S)-2-hydroxy-3-oxobutyl phosphate</name>
        <dbReference type="ChEBI" id="CHEBI:58830"/>
    </ligand>
</feature>
<gene>
    <name evidence="1" type="primary">ribH</name>
    <name type="ordered locus">BF0956</name>
</gene>
<proteinExistence type="inferred from homology"/>
<name>RISB_BACFR</name>
<dbReference type="EC" id="2.5.1.78" evidence="1"/>
<dbReference type="EMBL" id="AP006841">
    <property type="protein sequence ID" value="BAD47706.1"/>
    <property type="molecule type" value="Genomic_DNA"/>
</dbReference>
<dbReference type="RefSeq" id="YP_098240.3">
    <property type="nucleotide sequence ID" value="NC_006347.1"/>
</dbReference>
<dbReference type="SMR" id="Q64XS0"/>
<dbReference type="STRING" id="295405.BF0956"/>
<dbReference type="KEGG" id="bfr:BF0956"/>
<dbReference type="PATRIC" id="fig|295405.11.peg.958"/>
<dbReference type="HOGENOM" id="CLU_089358_1_2_10"/>
<dbReference type="OrthoDB" id="9809709at2"/>
<dbReference type="UniPathway" id="UPA00275">
    <property type="reaction ID" value="UER00404"/>
</dbReference>
<dbReference type="Proteomes" id="UP000002197">
    <property type="component" value="Chromosome"/>
</dbReference>
<dbReference type="GO" id="GO:0005829">
    <property type="term" value="C:cytosol"/>
    <property type="evidence" value="ECO:0007669"/>
    <property type="project" value="TreeGrafter"/>
</dbReference>
<dbReference type="GO" id="GO:0009349">
    <property type="term" value="C:riboflavin synthase complex"/>
    <property type="evidence" value="ECO:0007669"/>
    <property type="project" value="InterPro"/>
</dbReference>
<dbReference type="GO" id="GO:0000906">
    <property type="term" value="F:6,7-dimethyl-8-ribityllumazine synthase activity"/>
    <property type="evidence" value="ECO:0007669"/>
    <property type="project" value="UniProtKB-UniRule"/>
</dbReference>
<dbReference type="GO" id="GO:0009231">
    <property type="term" value="P:riboflavin biosynthetic process"/>
    <property type="evidence" value="ECO:0007669"/>
    <property type="project" value="UniProtKB-UniRule"/>
</dbReference>
<dbReference type="CDD" id="cd09209">
    <property type="entry name" value="Lumazine_synthase-I"/>
    <property type="match status" value="1"/>
</dbReference>
<dbReference type="FunFam" id="3.40.50.960:FF:000014">
    <property type="entry name" value="6,7-dimethyl-8-ribityllumazine synthase"/>
    <property type="match status" value="1"/>
</dbReference>
<dbReference type="Gene3D" id="3.40.50.960">
    <property type="entry name" value="Lumazine/riboflavin synthase"/>
    <property type="match status" value="1"/>
</dbReference>
<dbReference type="HAMAP" id="MF_00178">
    <property type="entry name" value="Lumazine_synth"/>
    <property type="match status" value="1"/>
</dbReference>
<dbReference type="InterPro" id="IPR034964">
    <property type="entry name" value="LS"/>
</dbReference>
<dbReference type="InterPro" id="IPR002180">
    <property type="entry name" value="LS/RS"/>
</dbReference>
<dbReference type="InterPro" id="IPR036467">
    <property type="entry name" value="LS/RS_sf"/>
</dbReference>
<dbReference type="NCBIfam" id="TIGR00114">
    <property type="entry name" value="lumazine-synth"/>
    <property type="match status" value="1"/>
</dbReference>
<dbReference type="PANTHER" id="PTHR21058:SF0">
    <property type="entry name" value="6,7-DIMETHYL-8-RIBITYLLUMAZINE SYNTHASE"/>
    <property type="match status" value="1"/>
</dbReference>
<dbReference type="PANTHER" id="PTHR21058">
    <property type="entry name" value="6,7-DIMETHYL-8-RIBITYLLUMAZINE SYNTHASE DMRL SYNTHASE LUMAZINE SYNTHASE"/>
    <property type="match status" value="1"/>
</dbReference>
<dbReference type="Pfam" id="PF00885">
    <property type="entry name" value="DMRL_synthase"/>
    <property type="match status" value="1"/>
</dbReference>
<dbReference type="SUPFAM" id="SSF52121">
    <property type="entry name" value="Lumazine synthase"/>
    <property type="match status" value="1"/>
</dbReference>